<dbReference type="EMBL" id="EU214989">
    <property type="protein sequence ID" value="ABW90800.1"/>
    <property type="molecule type" value="Genomic_DNA"/>
</dbReference>
<dbReference type="EMBL" id="EU214990">
    <property type="protein sequence ID" value="ABW90801.1"/>
    <property type="molecule type" value="Genomic_DNA"/>
</dbReference>
<dbReference type="EMBL" id="EU214991">
    <property type="protein sequence ID" value="ABW90802.1"/>
    <property type="molecule type" value="Genomic_DNA"/>
</dbReference>
<dbReference type="EMBL" id="EU214992">
    <property type="protein sequence ID" value="ABW90803.1"/>
    <property type="molecule type" value="Genomic_DNA"/>
</dbReference>
<dbReference type="EMBL" id="EU214993">
    <property type="protein sequence ID" value="ABW90804.1"/>
    <property type="molecule type" value="Genomic_DNA"/>
</dbReference>
<dbReference type="EMBL" id="EU214994">
    <property type="protein sequence ID" value="ABW90805.1"/>
    <property type="molecule type" value="Genomic_DNA"/>
</dbReference>
<dbReference type="EMBL" id="EU214995">
    <property type="protein sequence ID" value="ABW90806.1"/>
    <property type="molecule type" value="Genomic_DNA"/>
</dbReference>
<dbReference type="EMBL" id="EU214996">
    <property type="protein sequence ID" value="ABW90807.1"/>
    <property type="molecule type" value="Genomic_DNA"/>
</dbReference>
<dbReference type="EMBL" id="EU214997">
    <property type="protein sequence ID" value="ABW90808.1"/>
    <property type="molecule type" value="Genomic_DNA"/>
</dbReference>
<dbReference type="EMBL" id="EU214998">
    <property type="protein sequence ID" value="ABW90809.1"/>
    <property type="molecule type" value="Genomic_DNA"/>
</dbReference>
<dbReference type="EMBL" id="EU214999">
    <property type="protein sequence ID" value="ABW90810.1"/>
    <property type="molecule type" value="Genomic_DNA"/>
</dbReference>
<dbReference type="EMBL" id="EU215000">
    <property type="protein sequence ID" value="ABW90811.1"/>
    <property type="molecule type" value="Genomic_DNA"/>
</dbReference>
<dbReference type="EMBL" id="EU215001">
    <property type="protein sequence ID" value="ABW90812.1"/>
    <property type="molecule type" value="Genomic_DNA"/>
</dbReference>
<dbReference type="EMBL" id="EU215002">
    <property type="protein sequence ID" value="ABW90813.1"/>
    <property type="molecule type" value="Genomic_DNA"/>
</dbReference>
<dbReference type="EMBL" id="EU215003">
    <property type="protein sequence ID" value="ABW90814.1"/>
    <property type="molecule type" value="Genomic_DNA"/>
</dbReference>
<dbReference type="EMBL" id="EU215004">
    <property type="protein sequence ID" value="ABW90815.1"/>
    <property type="molecule type" value="Genomic_DNA"/>
</dbReference>
<dbReference type="EMBL" id="EU215005">
    <property type="protein sequence ID" value="ABW90816.1"/>
    <property type="molecule type" value="Genomic_DNA"/>
</dbReference>
<dbReference type="EMBL" id="EU215006">
    <property type="protein sequence ID" value="ABW90817.1"/>
    <property type="molecule type" value="Genomic_DNA"/>
</dbReference>
<dbReference type="EMBL" id="EU215007">
    <property type="protein sequence ID" value="ABW90818.1"/>
    <property type="molecule type" value="Genomic_DNA"/>
</dbReference>
<dbReference type="EMBL" id="EU215008">
    <property type="protein sequence ID" value="ABW90819.1"/>
    <property type="molecule type" value="Genomic_DNA"/>
</dbReference>
<dbReference type="EMBL" id="EU215009">
    <property type="protein sequence ID" value="ABW90820.1"/>
    <property type="molecule type" value="Genomic_DNA"/>
</dbReference>
<dbReference type="EMBL" id="EU215010">
    <property type="protein sequence ID" value="ABW90821.1"/>
    <property type="molecule type" value="Genomic_DNA"/>
</dbReference>
<dbReference type="EMBL" id="EU215011">
    <property type="protein sequence ID" value="ABW90822.1"/>
    <property type="molecule type" value="Genomic_DNA"/>
</dbReference>
<dbReference type="EMBL" id="EU215012">
    <property type="protein sequence ID" value="ABW90823.1"/>
    <property type="molecule type" value="Genomic_DNA"/>
</dbReference>
<dbReference type="EMBL" id="EU215013">
    <property type="protein sequence ID" value="ABW90824.1"/>
    <property type="molecule type" value="Genomic_DNA"/>
</dbReference>
<dbReference type="EMBL" id="EU215014">
    <property type="protein sequence ID" value="ABW90825.1"/>
    <property type="molecule type" value="Genomic_DNA"/>
</dbReference>
<dbReference type="EMBL" id="EU215040">
    <property type="protein sequence ID" value="ABW90851.1"/>
    <property type="molecule type" value="Genomic_DNA"/>
</dbReference>
<dbReference type="EMBL" id="CR855038">
    <property type="protein sequence ID" value="CAH65999.1"/>
    <property type="molecule type" value="Genomic_DNA"/>
</dbReference>
<dbReference type="EMBL" id="CM000129">
    <property type="status" value="NOT_ANNOTATED_CDS"/>
    <property type="molecule type" value="Genomic_DNA"/>
</dbReference>
<dbReference type="SMR" id="A8WAT2"/>
<dbReference type="STRING" id="39946.A8WAT2"/>
<dbReference type="Proteomes" id="UP000007015">
    <property type="component" value="Chromosome 4"/>
</dbReference>
<dbReference type="GO" id="GO:0005737">
    <property type="term" value="C:cytoplasm"/>
    <property type="evidence" value="ECO:0007669"/>
    <property type="project" value="UniProtKB-SubCell"/>
</dbReference>
<dbReference type="GO" id="GO:0005730">
    <property type="term" value="C:nucleolus"/>
    <property type="evidence" value="ECO:0007669"/>
    <property type="project" value="UniProtKB-SubCell"/>
</dbReference>
<dbReference type="GO" id="GO:0005524">
    <property type="term" value="F:ATP binding"/>
    <property type="evidence" value="ECO:0007669"/>
    <property type="project" value="UniProtKB-KW"/>
</dbReference>
<dbReference type="CDD" id="cd13396">
    <property type="entry name" value="ASKHA_NBD_AtArp8-like"/>
    <property type="match status" value="1"/>
</dbReference>
<dbReference type="Gene3D" id="1.20.1280.50">
    <property type="match status" value="1"/>
</dbReference>
<dbReference type="Gene3D" id="3.30.420.40">
    <property type="match status" value="2"/>
</dbReference>
<dbReference type="Gene3D" id="3.90.640.10">
    <property type="entry name" value="Actin, Chain A, domain 4"/>
    <property type="match status" value="1"/>
</dbReference>
<dbReference type="InterPro" id="IPR004000">
    <property type="entry name" value="Actin"/>
</dbReference>
<dbReference type="InterPro" id="IPR043129">
    <property type="entry name" value="ATPase_NBD"/>
</dbReference>
<dbReference type="InterPro" id="IPR036047">
    <property type="entry name" value="F-box-like_dom_sf"/>
</dbReference>
<dbReference type="InterPro" id="IPR001810">
    <property type="entry name" value="F-box_dom"/>
</dbReference>
<dbReference type="PANTHER" id="PTHR11937">
    <property type="entry name" value="ACTIN"/>
    <property type="match status" value="1"/>
</dbReference>
<dbReference type="Pfam" id="PF00022">
    <property type="entry name" value="Actin"/>
    <property type="match status" value="1"/>
</dbReference>
<dbReference type="Pfam" id="PF12937">
    <property type="entry name" value="F-box-like"/>
    <property type="match status" value="1"/>
</dbReference>
<dbReference type="SMART" id="SM00268">
    <property type="entry name" value="ACTIN"/>
    <property type="match status" value="1"/>
</dbReference>
<dbReference type="SMART" id="SM00256">
    <property type="entry name" value="FBOX"/>
    <property type="match status" value="1"/>
</dbReference>
<dbReference type="SUPFAM" id="SSF53067">
    <property type="entry name" value="Actin-like ATPase domain"/>
    <property type="match status" value="2"/>
</dbReference>
<dbReference type="SUPFAM" id="SSF81383">
    <property type="entry name" value="F-box domain"/>
    <property type="match status" value="1"/>
</dbReference>
<dbReference type="PROSITE" id="PS50181">
    <property type="entry name" value="FBOX"/>
    <property type="match status" value="1"/>
</dbReference>
<gene>
    <name type="primary">ARP8</name>
    <name type="ORF">OsI_017201</name>
</gene>
<evidence type="ECO:0000250" key="1"/>
<evidence type="ECO:0000255" key="2">
    <source>
        <dbReference type="PROSITE-ProRule" id="PRU00080"/>
    </source>
</evidence>
<evidence type="ECO:0000305" key="3"/>
<reference key="1">
    <citation type="journal article" date="2007" name="Genetics">
        <title>The extent of linkage disequilibrium in rice (Oryza sativa L.).</title>
        <authorList>
            <person name="Mather K.A."/>
            <person name="Caicedo A.L."/>
            <person name="Polato N.R."/>
            <person name="Olsen K.M."/>
            <person name="McCouch S."/>
            <person name="Purugganan M.D."/>
        </authorList>
    </citation>
    <scope>NUCLEOTIDE SEQUENCE [GENOMIC DNA]</scope>
</reference>
<reference key="2">
    <citation type="journal article" date="2002" name="Nature">
        <title>Sequence and analysis of rice chromosome 4.</title>
        <authorList>
            <person name="Feng Q."/>
            <person name="Zhang Y."/>
            <person name="Hao P."/>
            <person name="Wang S."/>
            <person name="Fu G."/>
            <person name="Huang Y."/>
            <person name="Li Y."/>
            <person name="Zhu J."/>
            <person name="Liu Y."/>
            <person name="Hu X."/>
            <person name="Jia P."/>
            <person name="Zhang Y."/>
            <person name="Zhao Q."/>
            <person name="Ying K."/>
            <person name="Yu S."/>
            <person name="Tang Y."/>
            <person name="Weng Q."/>
            <person name="Zhang L."/>
            <person name="Lu Y."/>
            <person name="Mu J."/>
            <person name="Lu Y."/>
            <person name="Zhang L.S."/>
            <person name="Yu Z."/>
            <person name="Fan D."/>
            <person name="Liu X."/>
            <person name="Lu T."/>
            <person name="Li C."/>
            <person name="Wu Y."/>
            <person name="Sun T."/>
            <person name="Lei H."/>
            <person name="Li T."/>
            <person name="Hu H."/>
            <person name="Guan J."/>
            <person name="Wu M."/>
            <person name="Zhang R."/>
            <person name="Zhou B."/>
            <person name="Chen Z."/>
            <person name="Chen L."/>
            <person name="Jin Z."/>
            <person name="Wang R."/>
            <person name="Yin H."/>
            <person name="Cai Z."/>
            <person name="Ren S."/>
            <person name="Lv G."/>
            <person name="Gu W."/>
            <person name="Zhu G."/>
            <person name="Tu Y."/>
            <person name="Jia J."/>
            <person name="Zhang Y."/>
            <person name="Chen J."/>
            <person name="Kang H."/>
            <person name="Chen X."/>
            <person name="Shao C."/>
            <person name="Sun Y."/>
            <person name="Hu Q."/>
            <person name="Zhang X."/>
            <person name="Zhang W."/>
            <person name="Wang L."/>
            <person name="Ding C."/>
            <person name="Sheng H."/>
            <person name="Gu J."/>
            <person name="Chen S."/>
            <person name="Ni L."/>
            <person name="Zhu F."/>
            <person name="Chen W."/>
            <person name="Lan L."/>
            <person name="Lai Y."/>
            <person name="Cheng Z."/>
            <person name="Gu M."/>
            <person name="Jiang J."/>
            <person name="Li J."/>
            <person name="Hong G."/>
            <person name="Xue Y."/>
            <person name="Han B."/>
        </authorList>
    </citation>
    <scope>NUCLEOTIDE SEQUENCE [LARGE SCALE GENOMIC DNA]</scope>
    <source>
        <strain>cv. Guang-Lu-Ai No.4</strain>
    </source>
</reference>
<reference key="3">
    <citation type="journal article" date="2005" name="PLoS Biol.">
        <title>The genomes of Oryza sativa: a history of duplications.</title>
        <authorList>
            <person name="Yu J."/>
            <person name="Wang J."/>
            <person name="Lin W."/>
            <person name="Li S."/>
            <person name="Li H."/>
            <person name="Zhou J."/>
            <person name="Ni P."/>
            <person name="Dong W."/>
            <person name="Hu S."/>
            <person name="Zeng C."/>
            <person name="Zhang J."/>
            <person name="Zhang Y."/>
            <person name="Li R."/>
            <person name="Xu Z."/>
            <person name="Li S."/>
            <person name="Li X."/>
            <person name="Zheng H."/>
            <person name="Cong L."/>
            <person name="Lin L."/>
            <person name="Yin J."/>
            <person name="Geng J."/>
            <person name="Li G."/>
            <person name="Shi J."/>
            <person name="Liu J."/>
            <person name="Lv H."/>
            <person name="Li J."/>
            <person name="Wang J."/>
            <person name="Deng Y."/>
            <person name="Ran L."/>
            <person name="Shi X."/>
            <person name="Wang X."/>
            <person name="Wu Q."/>
            <person name="Li C."/>
            <person name="Ren X."/>
            <person name="Wang J."/>
            <person name="Wang X."/>
            <person name="Li D."/>
            <person name="Liu D."/>
            <person name="Zhang X."/>
            <person name="Ji Z."/>
            <person name="Zhao W."/>
            <person name="Sun Y."/>
            <person name="Zhang Z."/>
            <person name="Bao J."/>
            <person name="Han Y."/>
            <person name="Dong L."/>
            <person name="Ji J."/>
            <person name="Chen P."/>
            <person name="Wu S."/>
            <person name="Liu J."/>
            <person name="Xiao Y."/>
            <person name="Bu D."/>
            <person name="Tan J."/>
            <person name="Yang L."/>
            <person name="Ye C."/>
            <person name="Zhang J."/>
            <person name="Xu J."/>
            <person name="Zhou Y."/>
            <person name="Yu Y."/>
            <person name="Zhang B."/>
            <person name="Zhuang S."/>
            <person name="Wei H."/>
            <person name="Liu B."/>
            <person name="Lei M."/>
            <person name="Yu H."/>
            <person name="Li Y."/>
            <person name="Xu H."/>
            <person name="Wei S."/>
            <person name="He X."/>
            <person name="Fang L."/>
            <person name="Zhang Z."/>
            <person name="Zhang Y."/>
            <person name="Huang X."/>
            <person name="Su Z."/>
            <person name="Tong W."/>
            <person name="Li J."/>
            <person name="Tong Z."/>
            <person name="Li S."/>
            <person name="Ye J."/>
            <person name="Wang L."/>
            <person name="Fang L."/>
            <person name="Lei T."/>
            <person name="Chen C.-S."/>
            <person name="Chen H.-C."/>
            <person name="Xu Z."/>
            <person name="Li H."/>
            <person name="Huang H."/>
            <person name="Zhang F."/>
            <person name="Xu H."/>
            <person name="Li N."/>
            <person name="Zhao C."/>
            <person name="Li S."/>
            <person name="Dong L."/>
            <person name="Huang Y."/>
            <person name="Li L."/>
            <person name="Xi Y."/>
            <person name="Qi Q."/>
            <person name="Li W."/>
            <person name="Zhang B."/>
            <person name="Hu W."/>
            <person name="Zhang Y."/>
            <person name="Tian X."/>
            <person name="Jiao Y."/>
            <person name="Liang X."/>
            <person name="Jin J."/>
            <person name="Gao L."/>
            <person name="Zheng W."/>
            <person name="Hao B."/>
            <person name="Liu S.-M."/>
            <person name="Wang W."/>
            <person name="Yuan L."/>
            <person name="Cao M."/>
            <person name="McDermott J."/>
            <person name="Samudrala R."/>
            <person name="Wang J."/>
            <person name="Wong G.K.-S."/>
            <person name="Yang H."/>
        </authorList>
    </citation>
    <scope>NUCLEOTIDE SEQUENCE [LARGE SCALE GENOMIC DNA]</scope>
    <source>
        <strain>cv. 93-11</strain>
    </source>
</reference>
<reference key="4">
    <citation type="journal article" date="2004" name="Trends Plant Sci.">
        <title>Plant actin-related proteins.</title>
        <authorList>
            <person name="Kandasamy M.K."/>
            <person name="Deal R.B."/>
            <person name="McKinney E.C."/>
            <person name="Meagher R.B."/>
        </authorList>
    </citation>
    <scope>REVIEW</scope>
    <scope>GENE FAMILY</scope>
    <scope>NOMENCLATURE</scope>
</reference>
<keyword id="KW-0067">ATP-binding</keyword>
<keyword id="KW-0963">Cytoplasm</keyword>
<keyword id="KW-0547">Nucleotide-binding</keyword>
<keyword id="KW-0539">Nucleus</keyword>
<keyword id="KW-1185">Reference proteome</keyword>
<accession>A8WAT2</accession>
<accession>A2XYQ8</accession>
<organism>
    <name type="scientific">Oryza sativa subsp. indica</name>
    <name type="common">Rice</name>
    <dbReference type="NCBI Taxonomy" id="39946"/>
    <lineage>
        <taxon>Eukaryota</taxon>
        <taxon>Viridiplantae</taxon>
        <taxon>Streptophyta</taxon>
        <taxon>Embryophyta</taxon>
        <taxon>Tracheophyta</taxon>
        <taxon>Spermatophyta</taxon>
        <taxon>Magnoliopsida</taxon>
        <taxon>Liliopsida</taxon>
        <taxon>Poales</taxon>
        <taxon>Poaceae</taxon>
        <taxon>BOP clade</taxon>
        <taxon>Oryzoideae</taxon>
        <taxon>Oryzeae</taxon>
        <taxon>Oryzinae</taxon>
        <taxon>Oryza</taxon>
        <taxon>Oryza sativa</taxon>
    </lineage>
</organism>
<proteinExistence type="inferred from homology"/>
<comment type="subcellular location">
    <subcellularLocation>
        <location evidence="1">Nucleus</location>
        <location evidence="1">Nucleolus</location>
    </subcellularLocation>
    <subcellularLocation>
        <location evidence="1">Cytoplasm</location>
    </subcellularLocation>
    <text evidence="1">Localized to the nucleolus in interphase cells and dispersed in the cytoplasm in mitotic cells.</text>
</comment>
<comment type="similarity">
    <text evidence="3">Belongs to the actin family. Plant ARP8 subfamily.</text>
</comment>
<sequence length="484" mass="53293">MAVLLRKVWGSVLARAAAGAAPPEAFAAAASPRRPQAAGEYGSLGALDVLPIDVLAQILRLLGPADAARSTAVCRAWRLLASDNGLWAFFLRLGPDPWELVVFAETHLGAGPALHPGLYYDSSPQLSFKHVYTRRAVVPGSIIVDGGSGYCKYGWSKYAAPSGRCATFLEFGNIESPMYARLRHFLSTIYTRMQVKPSTQPIIVVLPLCHSDDTESARASRKQYRDTLYSVLFDMNVPAVCSVDQAVLALYAAKRTSGIVVNIGFNATSIVPIFQGRVMHEIGVETVGQGALKLTGFLKELMQQRNITFESLYTVRTIKEKLCYVAADYEAEKRKDTQASCEVDGEGWFTLSEERFKTAEILFQPQIGGVRAMGLHKAVSLCMDHCYNSEVFGDDNWYKTVVLSGGSSCLPGLSERLEKELRELLPAHISEGIRVIPPPFGTDSAWFGAKMISNVSTFTEAWCIKKKQFRQKTRRNGPSFVNVW</sequence>
<name>ARP8_ORYSI</name>
<feature type="chain" id="PRO_0000320546" description="Actin-related protein 8">
    <location>
        <begin position="1"/>
        <end position="484"/>
    </location>
</feature>
<feature type="domain" description="F-box" evidence="2">
    <location>
        <begin position="44"/>
        <end position="90"/>
    </location>
</feature>
<feature type="binding site" evidence="1">
    <location>
        <begin position="262"/>
        <end position="265"/>
    </location>
    <ligand>
        <name>ATP</name>
        <dbReference type="ChEBI" id="CHEBI:30616"/>
    </ligand>
</feature>
<protein>
    <recommendedName>
        <fullName>Actin-related protein 8</fullName>
    </recommendedName>
    <alternativeName>
        <fullName>F-box protein ARP8</fullName>
    </alternativeName>
</protein>